<protein>
    <recommendedName>
        <fullName evidence="1">Triplex capsid protein 1</fullName>
    </recommendedName>
</protein>
<name>TRX1_HHV14</name>
<comment type="function">
    <text evidence="1">Structural component of the T=16 icosahedral capsid. The capsid is composed of pentamers and hexamers of major capsid protein/MCP, which are linked together by heterotrimers called triplexes. These triplexes are formed by a single molecule of triplex protein 1/TRX1 and two copies of triplex protein 2/TRX2. Additionally, TRX1 is required for efficient transport of TRX2 to the nucleus, which is the site of capsid assembly.</text>
</comment>
<comment type="subunit">
    <text evidence="1">Interacts with TRX2, MCP and capsid vertex component 2/CVC2.</text>
</comment>
<comment type="subcellular location">
    <subcellularLocation>
        <location evidence="1">Virion</location>
    </subcellularLocation>
    <subcellularLocation>
        <location evidence="1">Host nucleus</location>
    </subcellularLocation>
</comment>
<comment type="similarity">
    <text evidence="1">Belongs to the herpesviridae TRX1 protein family.</text>
</comment>
<organismHost>
    <name type="scientific">Homo sapiens</name>
    <name type="common">Human</name>
    <dbReference type="NCBI Taxonomy" id="9606"/>
</organismHost>
<organism>
    <name type="scientific">Human herpesvirus 1 (strain A44)</name>
    <name type="common">HHV-1</name>
    <name type="synonym">Human herpes simplex virus 1</name>
    <dbReference type="NCBI Taxonomy" id="10300"/>
    <lineage>
        <taxon>Viruses</taxon>
        <taxon>Duplodnaviria</taxon>
        <taxon>Heunggongvirae</taxon>
        <taxon>Peploviricota</taxon>
        <taxon>Herviviricetes</taxon>
        <taxon>Herpesvirales</taxon>
        <taxon>Orthoherpesviridae</taxon>
        <taxon>Alphaherpesvirinae</taxon>
        <taxon>Simplexvirus</taxon>
        <taxon>Simplexvirus humanalpha1</taxon>
        <taxon>Human herpesvirus 1</taxon>
    </lineage>
</organism>
<accession>P17586</accession>
<accession>P10222</accession>
<dbReference type="EMBL" id="M22962">
    <property type="protein sequence ID" value="AAA45769.1"/>
    <property type="molecule type" value="Genomic_DNA"/>
</dbReference>
<dbReference type="PIR" id="A31478">
    <property type="entry name" value="WMBE44"/>
</dbReference>
<dbReference type="SMR" id="P17586"/>
<dbReference type="GO" id="GO:0042025">
    <property type="term" value="C:host cell nucleus"/>
    <property type="evidence" value="ECO:0007669"/>
    <property type="project" value="UniProtKB-SubCell"/>
</dbReference>
<dbReference type="GO" id="GO:0019028">
    <property type="term" value="C:viral capsid"/>
    <property type="evidence" value="ECO:0007669"/>
    <property type="project" value="UniProtKB-KW"/>
</dbReference>
<dbReference type="GO" id="GO:0003677">
    <property type="term" value="F:DNA binding"/>
    <property type="evidence" value="ECO:0007669"/>
    <property type="project" value="InterPro"/>
</dbReference>
<dbReference type="GO" id="GO:0019069">
    <property type="term" value="P:viral capsid assembly"/>
    <property type="evidence" value="ECO:0007669"/>
    <property type="project" value="InterPro"/>
</dbReference>
<dbReference type="HAMAP" id="MF_04018">
    <property type="entry name" value="HSV_TRX1"/>
    <property type="match status" value="1"/>
</dbReference>
<dbReference type="InterPro" id="IPR004999">
    <property type="entry name" value="Herpes_1"/>
</dbReference>
<dbReference type="Pfam" id="PF03327">
    <property type="entry name" value="Herpes_VP19C"/>
    <property type="match status" value="1"/>
</dbReference>
<gene>
    <name evidence="1" type="primary">TRX1</name>
    <name type="ordered locus">UL38</name>
</gene>
<reference key="1">
    <citation type="journal article" date="1989" name="J. Virol.">
        <title>Physical mapping and nucleotide sequence of a herpes simplex virus type 1 gene required for capsid assembly.</title>
        <authorList>
            <person name="Pertuiset B."/>
            <person name="Boccara M."/>
            <person name="Cebrian J."/>
            <person name="Berthelot N."/>
            <person name="Chousterman S."/>
            <person name="Puvion-Dutilleul F."/>
            <person name="Sisman J."/>
            <person name="Sheldrick P."/>
        </authorList>
    </citation>
    <scope>NUCLEOTIDE SEQUENCE [GENOMIC DNA]</scope>
</reference>
<sequence length="465" mass="50232">MKTNPLPATPSVWGGSTVELPPTTRDTAGQGLLRRVLRPPISRRDGPVLPRGSGPRRAASTLWLLGLDGTDAPPGALTPNDDTEQALDKILRGTMRGGAALIGSPRHHLTRQVILTDLCQPNADRAGTLLLALRHPADLPHLAHQRAPPGRQTERLGEAWGQLMEATALGSGRAESGCTRAGLVSFNFLVAACAASYDARDAADAVRAHVTANYRGTRVGARLDRFSECLRAMVHTHVFPHEVMRFFGGLVSWVTQDELASVTAVCAGPQEAAHTGHPGRPRSAVILPACAFVDLDAELGLGGPGAAFLYLVLTYRQRRDQELCCVYVIKSQLPPRGLEPALERLFGRLRITNTIHGTEDMTPPAPNRNPDFPLAGLAANPQTPRCSAGQVTNPQFADRLYRWQPDLRGRPTARTCTYAAFAELGMMPEDSPRCLHRTERFGAVTVPVVILEGVVWCPGEWRACA</sequence>
<evidence type="ECO:0000255" key="1">
    <source>
        <dbReference type="HAMAP-Rule" id="MF_04018"/>
    </source>
</evidence>
<feature type="chain" id="PRO_0000115713" description="Triplex capsid protein 1">
    <location>
        <begin position="1"/>
        <end position="465"/>
    </location>
</feature>
<proteinExistence type="inferred from homology"/>
<keyword id="KW-0167">Capsid protein</keyword>
<keyword id="KW-1048">Host nucleus</keyword>
<keyword id="KW-0946">Virion</keyword>